<feature type="chain" id="PRO_0000132747" description="DNA-directed RNA polymerase II subunit RPB3">
    <location>
        <begin position="1"/>
        <end position="297"/>
    </location>
</feature>
<feature type="region of interest" description="Disordered" evidence="2">
    <location>
        <begin position="270"/>
        <end position="297"/>
    </location>
</feature>
<feature type="compositionally biased region" description="Polar residues" evidence="2">
    <location>
        <begin position="287"/>
        <end position="297"/>
    </location>
</feature>
<feature type="sequence variant" description="In strain: Isolate TS99.">
    <original>I</original>
    <variation>L</variation>
    <location>
        <position position="7"/>
    </location>
</feature>
<feature type="sequence variant" description="In strain: Isolate TS54.">
    <original>KN</original>
    <variation>RD</variation>
    <location>
        <begin position="14"/>
        <end position="15"/>
    </location>
</feature>
<feature type="sequence variant" description="In strain: Isolate TS54.">
    <original>T</original>
    <variation>S</variation>
    <location>
        <position position="24"/>
    </location>
</feature>
<feature type="sequence variant" description="In strain: Isolate TS99.">
    <original>A</original>
    <variation>P</variation>
    <location>
        <position position="29"/>
    </location>
</feature>
<feature type="sequence variant" description="In strain: Isolate TS54.">
    <original>G</original>
    <variation>D</variation>
    <location>
        <position position="67"/>
    </location>
</feature>
<feature type="strand" evidence="4">
    <location>
        <begin position="6"/>
        <end position="12"/>
    </location>
</feature>
<feature type="strand" evidence="4">
    <location>
        <begin position="14"/>
        <end position="23"/>
    </location>
</feature>
<feature type="helix" evidence="4">
    <location>
        <begin position="26"/>
        <end position="38"/>
    </location>
</feature>
<feature type="strand" evidence="4">
    <location>
        <begin position="42"/>
        <end position="53"/>
    </location>
</feature>
<feature type="strand" evidence="4">
    <location>
        <begin position="55"/>
        <end position="57"/>
    </location>
</feature>
<feature type="helix" evidence="4">
    <location>
        <begin position="59"/>
        <end position="68"/>
    </location>
</feature>
<feature type="turn" evidence="4">
    <location>
        <begin position="74"/>
        <end position="77"/>
    </location>
</feature>
<feature type="turn" evidence="4">
    <location>
        <begin position="87"/>
        <end position="89"/>
    </location>
</feature>
<feature type="strand" evidence="4">
    <location>
        <begin position="92"/>
        <end position="94"/>
    </location>
</feature>
<feature type="turn" evidence="4">
    <location>
        <begin position="97"/>
        <end position="99"/>
    </location>
</feature>
<feature type="strand" evidence="4">
    <location>
        <begin position="101"/>
        <end position="108"/>
    </location>
</feature>
<feature type="strand" evidence="4">
    <location>
        <begin position="111"/>
        <end position="118"/>
    </location>
</feature>
<feature type="helix" evidence="4">
    <location>
        <begin position="119"/>
        <end position="121"/>
    </location>
</feature>
<feature type="strand" evidence="4">
    <location>
        <begin position="143"/>
        <end position="149"/>
    </location>
</feature>
<feature type="strand" evidence="4">
    <location>
        <begin position="153"/>
        <end position="163"/>
    </location>
</feature>
<feature type="turn" evidence="4">
    <location>
        <begin position="165"/>
        <end position="167"/>
    </location>
</feature>
<feature type="helix" evidence="4">
    <location>
        <begin position="169"/>
        <end position="171"/>
    </location>
</feature>
<feature type="strand" evidence="4">
    <location>
        <begin position="174"/>
        <end position="181"/>
    </location>
</feature>
<feature type="helix" evidence="4">
    <location>
        <begin position="198"/>
        <end position="201"/>
    </location>
</feature>
<feature type="helix" evidence="4">
    <location>
        <begin position="206"/>
        <end position="210"/>
    </location>
</feature>
<feature type="strand" evidence="4">
    <location>
        <begin position="228"/>
        <end position="235"/>
    </location>
</feature>
<feature type="strand" evidence="4">
    <location>
        <begin position="237"/>
        <end position="239"/>
    </location>
</feature>
<feature type="helix" evidence="4">
    <location>
        <begin position="241"/>
        <end position="263"/>
    </location>
</feature>
<name>RPB3_SCHPO</name>
<proteinExistence type="evidence at protein level"/>
<organism>
    <name type="scientific">Schizosaccharomyces pombe (strain 972 / ATCC 24843)</name>
    <name type="common">Fission yeast</name>
    <dbReference type="NCBI Taxonomy" id="284812"/>
    <lineage>
        <taxon>Eukaryota</taxon>
        <taxon>Fungi</taxon>
        <taxon>Dikarya</taxon>
        <taxon>Ascomycota</taxon>
        <taxon>Taphrinomycotina</taxon>
        <taxon>Schizosaccharomycetes</taxon>
        <taxon>Schizosaccharomycetales</taxon>
        <taxon>Schizosaccharomycetaceae</taxon>
        <taxon>Schizosaccharomyces</taxon>
    </lineage>
</organism>
<sequence length="297" mass="33716">MDSETHITIRNISKNSVDFVLTNTSLAVANSLRRVVLAEIPTVAIDLVEINVNTSVMPDEFLAHRLGMIPLDSSNIDEPPPVGLEYTRNCDCDQYCPKCSVELFLNAKCTGEGTMEIYARDLVVSSNSSLGHPILADPKSRGPLICKLRKEQEISLRCIAKKGIAKEHAKWSPTSAVAFEYDPWNKLQHTDYWFENDADAEWPKSKNADWEEPPREGEPFNFQEEPRRFYMDVESVGSIPPNEIMVQGLRILQEKLAVLVRDLDEEQPTQLSANELNMEENAEMNWSPYQNGEENTW</sequence>
<reference key="1">
    <citation type="journal article" date="1993" name="Nucleic Acids Res.">
        <title>Subunits of the Schizosaccharomyces pombe RNA polymerase II: enzyme purification and structure of the subunit 3 gene.</title>
        <authorList>
            <person name="Azuma Y."/>
            <person name="Yamagishi M."/>
            <person name="Ishihama A."/>
        </authorList>
    </citation>
    <scope>NUCLEOTIDE SEQUENCE [GENOMIC DNA]</scope>
    <scope>IDENTIFICATION IN THE RNA POLYMERASE II COMPLEX</scope>
    <source>
        <strain>972 / ATCC 24843</strain>
    </source>
</reference>
<reference key="2">
    <citation type="journal article" date="2002" name="Nature">
        <title>The genome sequence of Schizosaccharomyces pombe.</title>
        <authorList>
            <person name="Wood V."/>
            <person name="Gwilliam R."/>
            <person name="Rajandream M.A."/>
            <person name="Lyne M.H."/>
            <person name="Lyne R."/>
            <person name="Stewart A."/>
            <person name="Sgouros J.G."/>
            <person name="Peat N."/>
            <person name="Hayles J."/>
            <person name="Baker S.G."/>
            <person name="Basham D."/>
            <person name="Bowman S."/>
            <person name="Brooks K."/>
            <person name="Brown D."/>
            <person name="Brown S."/>
            <person name="Chillingworth T."/>
            <person name="Churcher C.M."/>
            <person name="Collins M."/>
            <person name="Connor R."/>
            <person name="Cronin A."/>
            <person name="Davis P."/>
            <person name="Feltwell T."/>
            <person name="Fraser A."/>
            <person name="Gentles S."/>
            <person name="Goble A."/>
            <person name="Hamlin N."/>
            <person name="Harris D.E."/>
            <person name="Hidalgo J."/>
            <person name="Hodgson G."/>
            <person name="Holroyd S."/>
            <person name="Hornsby T."/>
            <person name="Howarth S."/>
            <person name="Huckle E.J."/>
            <person name="Hunt S."/>
            <person name="Jagels K."/>
            <person name="James K.D."/>
            <person name="Jones L."/>
            <person name="Jones M."/>
            <person name="Leather S."/>
            <person name="McDonald S."/>
            <person name="McLean J."/>
            <person name="Mooney P."/>
            <person name="Moule S."/>
            <person name="Mungall K.L."/>
            <person name="Murphy L.D."/>
            <person name="Niblett D."/>
            <person name="Odell C."/>
            <person name="Oliver K."/>
            <person name="O'Neil S."/>
            <person name="Pearson D."/>
            <person name="Quail M.A."/>
            <person name="Rabbinowitsch E."/>
            <person name="Rutherford K.M."/>
            <person name="Rutter S."/>
            <person name="Saunders D."/>
            <person name="Seeger K."/>
            <person name="Sharp S."/>
            <person name="Skelton J."/>
            <person name="Simmonds M.N."/>
            <person name="Squares R."/>
            <person name="Squares S."/>
            <person name="Stevens K."/>
            <person name="Taylor K."/>
            <person name="Taylor R.G."/>
            <person name="Tivey A."/>
            <person name="Walsh S.V."/>
            <person name="Warren T."/>
            <person name="Whitehead S."/>
            <person name="Woodward J.R."/>
            <person name="Volckaert G."/>
            <person name="Aert R."/>
            <person name="Robben J."/>
            <person name="Grymonprez B."/>
            <person name="Weltjens I."/>
            <person name="Vanstreels E."/>
            <person name="Rieger M."/>
            <person name="Schaefer M."/>
            <person name="Mueller-Auer S."/>
            <person name="Gabel C."/>
            <person name="Fuchs M."/>
            <person name="Duesterhoeft A."/>
            <person name="Fritzc C."/>
            <person name="Holzer E."/>
            <person name="Moestl D."/>
            <person name="Hilbert H."/>
            <person name="Borzym K."/>
            <person name="Langer I."/>
            <person name="Beck A."/>
            <person name="Lehrach H."/>
            <person name="Reinhardt R."/>
            <person name="Pohl T.M."/>
            <person name="Eger P."/>
            <person name="Zimmermann W."/>
            <person name="Wedler H."/>
            <person name="Wambutt R."/>
            <person name="Purnelle B."/>
            <person name="Goffeau A."/>
            <person name="Cadieu E."/>
            <person name="Dreano S."/>
            <person name="Gloux S."/>
            <person name="Lelaure V."/>
            <person name="Mottier S."/>
            <person name="Galibert F."/>
            <person name="Aves S.J."/>
            <person name="Xiang Z."/>
            <person name="Hunt C."/>
            <person name="Moore K."/>
            <person name="Hurst S.M."/>
            <person name="Lucas M."/>
            <person name="Rochet M."/>
            <person name="Gaillardin C."/>
            <person name="Tallada V.A."/>
            <person name="Garzon A."/>
            <person name="Thode G."/>
            <person name="Daga R.R."/>
            <person name="Cruzado L."/>
            <person name="Jimenez J."/>
            <person name="Sanchez M."/>
            <person name="del Rey F."/>
            <person name="Benito J."/>
            <person name="Dominguez A."/>
            <person name="Revuelta J.L."/>
            <person name="Moreno S."/>
            <person name="Armstrong J."/>
            <person name="Forsburg S.L."/>
            <person name="Cerutti L."/>
            <person name="Lowe T."/>
            <person name="McCombie W.R."/>
            <person name="Paulsen I."/>
            <person name="Potashkin J."/>
            <person name="Shpakovski G.V."/>
            <person name="Ussery D."/>
            <person name="Barrell B.G."/>
            <person name="Nurse P."/>
        </authorList>
    </citation>
    <scope>NUCLEOTIDE SEQUENCE [LARGE SCALE GENOMIC DNA]</scope>
    <source>
        <strain>972 / ATCC 24843</strain>
    </source>
</reference>
<reference key="3">
    <citation type="journal article" date="1995" name="J. Biochem.">
        <title>Isolation of thermolabile mutant RNA polymerase II from fission yeast Schizosaccharomyces pombe with mutations in the subunit 3 gene.</title>
        <authorList>
            <person name="Azuma Y."/>
            <person name="Yasui K."/>
            <person name="Yamagishi M."/>
            <person name="Ishihama A."/>
        </authorList>
    </citation>
    <scope>VARIANTS</scope>
    <source>
        <strain>JY265</strain>
    </source>
</reference>
<evidence type="ECO:0000250" key="1"/>
<evidence type="ECO:0000256" key="2">
    <source>
        <dbReference type="SAM" id="MobiDB-lite"/>
    </source>
</evidence>
<evidence type="ECO:0000305" key="3"/>
<evidence type="ECO:0007829" key="4">
    <source>
        <dbReference type="PDB" id="8QSZ"/>
    </source>
</evidence>
<keyword id="KW-0002">3D-structure</keyword>
<keyword id="KW-0240">DNA-directed RNA polymerase</keyword>
<keyword id="KW-0539">Nucleus</keyword>
<keyword id="KW-1185">Reference proteome</keyword>
<keyword id="KW-0804">Transcription</keyword>
<accession>P37382</accession>
<accession>P78959</accession>
<accession>P78960</accession>
<accession>Q9UUM9</accession>
<gene>
    <name type="primary">rpb3</name>
    <name type="ORF">SPCC1442.10c</name>
</gene>
<comment type="function">
    <text evidence="1">DNA-dependent RNA polymerase catalyzes the transcription of DNA into RNA using the four ribonucleoside triphosphates as substrates. Component of RNA polymerase II which synthesizes mRNA precursors and many functional non-coding RNAs. Pol II is the central component of the basal RNA polymerase II transcription machinery. It is composed of mobile elements that move relative to each other. RPB3 is part of the core element with the central large cleft and the clamp element that moves to open and close the cleft (By similarity).</text>
</comment>
<comment type="subunit">
    <text evidence="1">Component of the RNA polymerase II (Pol II) complex consisting of 12 subunits.</text>
</comment>
<comment type="subcellular location">
    <subcellularLocation>
        <location>Nucleus</location>
    </subcellularLocation>
</comment>
<comment type="similarity">
    <text evidence="3">Belongs to the archaeal Rpo3/eukaryotic RPB3 RNA polymerase subunit family.</text>
</comment>
<dbReference type="EMBL" id="D15070">
    <property type="protein sequence ID" value="BAA22566.1"/>
    <property type="molecule type" value="Genomic_DNA"/>
</dbReference>
<dbReference type="EMBL" id="CU329672">
    <property type="protein sequence ID" value="CAA21444.1"/>
    <property type="molecule type" value="Genomic_DNA"/>
</dbReference>
<dbReference type="EMBL" id="D50661">
    <property type="protein sequence ID" value="BAA09315.1"/>
    <property type="molecule type" value="Genomic_DNA"/>
</dbReference>
<dbReference type="EMBL" id="D50662">
    <property type="protein sequence ID" value="BAA09316.1"/>
    <property type="molecule type" value="Genomic_DNA"/>
</dbReference>
<dbReference type="PIR" id="S43201">
    <property type="entry name" value="S43201"/>
</dbReference>
<dbReference type="PIR" id="T40975">
    <property type="entry name" value="T40975"/>
</dbReference>
<dbReference type="RefSeq" id="NP_588324.1">
    <property type="nucleotide sequence ID" value="NM_001023315.2"/>
</dbReference>
<dbReference type="PDB" id="3H0G">
    <property type="method" value="X-ray"/>
    <property type="resolution" value="3.65 A"/>
    <property type="chains" value="C/O=1-297"/>
</dbReference>
<dbReference type="PDB" id="5U0S">
    <property type="method" value="EM"/>
    <property type="resolution" value="7.80 A"/>
    <property type="chains" value="c=1-297"/>
</dbReference>
<dbReference type="PDB" id="8QSZ">
    <property type="method" value="EM"/>
    <property type="resolution" value="2.67 A"/>
    <property type="chains" value="C=1-297"/>
</dbReference>
<dbReference type="PDBsum" id="3H0G"/>
<dbReference type="PDBsum" id="5U0S"/>
<dbReference type="PDBsum" id="8QSZ"/>
<dbReference type="EMDB" id="EMD-18643"/>
<dbReference type="EMDB" id="EMD-8480"/>
<dbReference type="SMR" id="P37382"/>
<dbReference type="BioGRID" id="275397">
    <property type="interactions" value="25"/>
</dbReference>
<dbReference type="ComplexPortal" id="CPX-2661">
    <property type="entry name" value="DNA-directed RNA polymerase II complex"/>
</dbReference>
<dbReference type="FunCoup" id="P37382">
    <property type="interactions" value="660"/>
</dbReference>
<dbReference type="IntAct" id="P37382">
    <property type="interactions" value="4"/>
</dbReference>
<dbReference type="MINT" id="P37382"/>
<dbReference type="STRING" id="284812.P37382"/>
<dbReference type="iPTMnet" id="P37382"/>
<dbReference type="PaxDb" id="4896-SPCC1442.10c.1"/>
<dbReference type="EnsemblFungi" id="SPCC1442.10c.1">
    <property type="protein sequence ID" value="SPCC1442.10c.1:pep"/>
    <property type="gene ID" value="SPCC1442.10c"/>
</dbReference>
<dbReference type="GeneID" id="2538816"/>
<dbReference type="KEGG" id="spo:2538816"/>
<dbReference type="PomBase" id="SPCC1442.10c">
    <property type="gene designation" value="rpb3"/>
</dbReference>
<dbReference type="VEuPathDB" id="FungiDB:SPCC1442.10c"/>
<dbReference type="eggNOG" id="KOG1522">
    <property type="taxonomic scope" value="Eukaryota"/>
</dbReference>
<dbReference type="HOGENOM" id="CLU_038421_1_1_1"/>
<dbReference type="InParanoid" id="P37382"/>
<dbReference type="OMA" id="FYFEVES"/>
<dbReference type="PhylomeDB" id="P37382"/>
<dbReference type="Reactome" id="R-SPO-113418">
    <property type="pathway name" value="Formation of the Early Elongation Complex"/>
</dbReference>
<dbReference type="Reactome" id="R-SPO-5578749">
    <property type="pathway name" value="Transcriptional regulation by small RNAs"/>
</dbReference>
<dbReference type="Reactome" id="R-SPO-674695">
    <property type="pathway name" value="RNA Polymerase II Pre-transcription Events"/>
</dbReference>
<dbReference type="Reactome" id="R-SPO-6781823">
    <property type="pathway name" value="Formation of TC-NER Pre-Incision Complex"/>
</dbReference>
<dbReference type="Reactome" id="R-SPO-6782135">
    <property type="pathway name" value="Dual incision in TC-NER"/>
</dbReference>
<dbReference type="Reactome" id="R-SPO-6782210">
    <property type="pathway name" value="Gap-filling DNA repair synthesis and ligation in TC-NER"/>
</dbReference>
<dbReference type="Reactome" id="R-SPO-6796648">
    <property type="pathway name" value="TP53 Regulates Transcription of DNA Repair Genes"/>
</dbReference>
<dbReference type="Reactome" id="R-SPO-6807505">
    <property type="pathway name" value="RNA polymerase II transcribes snRNA genes"/>
</dbReference>
<dbReference type="Reactome" id="R-SPO-72086">
    <property type="pathway name" value="mRNA Capping"/>
</dbReference>
<dbReference type="Reactome" id="R-SPO-72163">
    <property type="pathway name" value="mRNA Splicing - Major Pathway"/>
</dbReference>
<dbReference type="Reactome" id="R-SPO-72203">
    <property type="pathway name" value="Processing of Capped Intron-Containing Pre-mRNA"/>
</dbReference>
<dbReference type="Reactome" id="R-SPO-73776">
    <property type="pathway name" value="RNA Polymerase II Promoter Escape"/>
</dbReference>
<dbReference type="Reactome" id="R-SPO-73779">
    <property type="pathway name" value="RNA Polymerase II Transcription Pre-Initiation And Promoter Opening"/>
</dbReference>
<dbReference type="Reactome" id="R-SPO-75953">
    <property type="pathway name" value="RNA Polymerase II Transcription Initiation"/>
</dbReference>
<dbReference type="Reactome" id="R-SPO-76042">
    <property type="pathway name" value="RNA Polymerase II Transcription Initiation And Promoter Clearance"/>
</dbReference>
<dbReference type="Reactome" id="R-SPO-77075">
    <property type="pathway name" value="RNA Pol II CTD phosphorylation and interaction with CE"/>
</dbReference>
<dbReference type="Reactome" id="R-SPO-9018519">
    <property type="pathway name" value="Estrogen-dependent gene expression"/>
</dbReference>
<dbReference type="EvolutionaryTrace" id="P37382"/>
<dbReference type="PRO" id="PR:P37382"/>
<dbReference type="Proteomes" id="UP000002485">
    <property type="component" value="Chromosome III"/>
</dbReference>
<dbReference type="GO" id="GO:0000785">
    <property type="term" value="C:chromatin"/>
    <property type="evidence" value="ECO:0000314"/>
    <property type="project" value="PomBase"/>
</dbReference>
<dbReference type="GO" id="GO:0005829">
    <property type="term" value="C:cytosol"/>
    <property type="evidence" value="ECO:0007005"/>
    <property type="project" value="PomBase"/>
</dbReference>
<dbReference type="GO" id="GO:0005634">
    <property type="term" value="C:nucleus"/>
    <property type="evidence" value="ECO:0007005"/>
    <property type="project" value="PomBase"/>
</dbReference>
<dbReference type="GO" id="GO:0005665">
    <property type="term" value="C:RNA polymerase II, core complex"/>
    <property type="evidence" value="ECO:0000314"/>
    <property type="project" value="PomBase"/>
</dbReference>
<dbReference type="GO" id="GO:0016591">
    <property type="term" value="C:RNA polymerase II, holoenzyme"/>
    <property type="evidence" value="ECO:0000269"/>
    <property type="project" value="PomBase"/>
</dbReference>
<dbReference type="GO" id="GO:0003677">
    <property type="term" value="F:DNA binding"/>
    <property type="evidence" value="ECO:0007669"/>
    <property type="project" value="InterPro"/>
</dbReference>
<dbReference type="GO" id="GO:0003899">
    <property type="term" value="F:DNA-directed RNA polymerase activity"/>
    <property type="evidence" value="ECO:0007669"/>
    <property type="project" value="InterPro"/>
</dbReference>
<dbReference type="GO" id="GO:0046983">
    <property type="term" value="F:protein dimerization activity"/>
    <property type="evidence" value="ECO:0007669"/>
    <property type="project" value="InterPro"/>
</dbReference>
<dbReference type="GO" id="GO:0006366">
    <property type="term" value="P:transcription by RNA polymerase II"/>
    <property type="evidence" value="ECO:0000269"/>
    <property type="project" value="PomBase"/>
</dbReference>
<dbReference type="CDD" id="cd07031">
    <property type="entry name" value="RNAP_II_RPB3"/>
    <property type="match status" value="1"/>
</dbReference>
<dbReference type="FunFam" id="2.170.120.12:FF:000002">
    <property type="entry name" value="DNA-directed RNA polymerase II subunit RPB3"/>
    <property type="match status" value="1"/>
</dbReference>
<dbReference type="Gene3D" id="2.170.120.12">
    <property type="entry name" value="DNA-directed RNA polymerase, insert domain"/>
    <property type="match status" value="1"/>
</dbReference>
<dbReference type="Gene3D" id="3.30.1360.10">
    <property type="entry name" value="RNA polymerase, RBP11-like subunit"/>
    <property type="match status" value="1"/>
</dbReference>
<dbReference type="HAMAP" id="MF_00320">
    <property type="entry name" value="RNApol_arch_Rpo3"/>
    <property type="match status" value="1"/>
</dbReference>
<dbReference type="InterPro" id="IPR001514">
    <property type="entry name" value="DNA-dir_RNA_pol_30-40kDasu_CS"/>
</dbReference>
<dbReference type="InterPro" id="IPR011262">
    <property type="entry name" value="DNA-dir_RNA_pol_insert"/>
</dbReference>
<dbReference type="InterPro" id="IPR011263">
    <property type="entry name" value="DNA-dir_RNA_pol_RpoA/D/Rpb3"/>
</dbReference>
<dbReference type="InterPro" id="IPR036603">
    <property type="entry name" value="RBP11-like"/>
</dbReference>
<dbReference type="InterPro" id="IPR022842">
    <property type="entry name" value="RNAP_Rpo3/Rpb3/RPAC1"/>
</dbReference>
<dbReference type="InterPro" id="IPR036643">
    <property type="entry name" value="RNApol_insert_sf"/>
</dbReference>
<dbReference type="InterPro" id="IPR050518">
    <property type="entry name" value="Rpo3/RPB3_RNA_Pol_subunit"/>
</dbReference>
<dbReference type="PANTHER" id="PTHR11800">
    <property type="entry name" value="DNA-DIRECTED RNA POLYMERASE"/>
    <property type="match status" value="1"/>
</dbReference>
<dbReference type="PANTHER" id="PTHR11800:SF2">
    <property type="entry name" value="DNA-DIRECTED RNA POLYMERASE II SUBUNIT RPB3"/>
    <property type="match status" value="1"/>
</dbReference>
<dbReference type="Pfam" id="PF01000">
    <property type="entry name" value="RNA_pol_A_bac"/>
    <property type="match status" value="1"/>
</dbReference>
<dbReference type="Pfam" id="PF01193">
    <property type="entry name" value="RNA_pol_L"/>
    <property type="match status" value="1"/>
</dbReference>
<dbReference type="SMART" id="SM00662">
    <property type="entry name" value="RPOLD"/>
    <property type="match status" value="1"/>
</dbReference>
<dbReference type="SUPFAM" id="SSF56553">
    <property type="entry name" value="Insert subdomain of RNA polymerase alpha subunit"/>
    <property type="match status" value="1"/>
</dbReference>
<dbReference type="SUPFAM" id="SSF55257">
    <property type="entry name" value="RBP11-like subunits of RNA polymerase"/>
    <property type="match status" value="1"/>
</dbReference>
<dbReference type="PROSITE" id="PS00446">
    <property type="entry name" value="RNA_POL_D_30KD"/>
    <property type="match status" value="1"/>
</dbReference>
<protein>
    <recommendedName>
        <fullName>DNA-directed RNA polymerase II subunit RPB3</fullName>
        <shortName>RNA polymerase II subunit 3</shortName>
        <shortName>RNA polymerase II subunit B3</shortName>
    </recommendedName>
    <alternativeName>
        <fullName>DNA-directed RNA polymerase II 33 kDa polypeptide</fullName>
    </alternativeName>
</protein>